<keyword id="KW-0210">Decarboxylase</keyword>
<keyword id="KW-0456">Lyase</keyword>
<keyword id="KW-0663">Pyridoxal phosphate</keyword>
<keyword id="KW-1185">Reference proteome</keyword>
<dbReference type="EC" id="4.1.1.15"/>
<dbReference type="EMBL" id="AE005674">
    <property type="protein sequence ID" value="AAN45045.2"/>
    <property type="molecule type" value="Genomic_DNA"/>
</dbReference>
<dbReference type="EMBL" id="AE014073">
    <property type="protein sequence ID" value="AAP19142.1"/>
    <property type="molecule type" value="Genomic_DNA"/>
</dbReference>
<dbReference type="RefSeq" id="NP_709338.2">
    <property type="nucleotide sequence ID" value="NC_004337.2"/>
</dbReference>
<dbReference type="RefSeq" id="WP_000372244.1">
    <property type="nucleotide sequence ID" value="NZ_WHSI01000122.1"/>
</dbReference>
<dbReference type="SMR" id="Q83PR1"/>
<dbReference type="STRING" id="198214.SF3594"/>
<dbReference type="PaxDb" id="198214-SF3594"/>
<dbReference type="GeneID" id="1026324"/>
<dbReference type="KEGG" id="sfl:SF3594"/>
<dbReference type="KEGG" id="sfx:S4173"/>
<dbReference type="PATRIC" id="fig|198214.7.peg.4243"/>
<dbReference type="HOGENOM" id="CLU_019582_0_0_6"/>
<dbReference type="Proteomes" id="UP000001006">
    <property type="component" value="Chromosome"/>
</dbReference>
<dbReference type="Proteomes" id="UP000002673">
    <property type="component" value="Chromosome"/>
</dbReference>
<dbReference type="GO" id="GO:0005829">
    <property type="term" value="C:cytosol"/>
    <property type="evidence" value="ECO:0007669"/>
    <property type="project" value="TreeGrafter"/>
</dbReference>
<dbReference type="GO" id="GO:0004351">
    <property type="term" value="F:glutamate decarboxylase activity"/>
    <property type="evidence" value="ECO:0007669"/>
    <property type="project" value="UniProtKB-EC"/>
</dbReference>
<dbReference type="GO" id="GO:0030170">
    <property type="term" value="F:pyridoxal phosphate binding"/>
    <property type="evidence" value="ECO:0007669"/>
    <property type="project" value="InterPro"/>
</dbReference>
<dbReference type="GO" id="GO:0006538">
    <property type="term" value="P:glutamate catabolic process"/>
    <property type="evidence" value="ECO:0007669"/>
    <property type="project" value="TreeGrafter"/>
</dbReference>
<dbReference type="CDD" id="cd06450">
    <property type="entry name" value="DOPA_deC_like"/>
    <property type="match status" value="1"/>
</dbReference>
<dbReference type="FunFam" id="3.40.640.10:FF:000017">
    <property type="entry name" value="Glutamate decarboxylase"/>
    <property type="match status" value="1"/>
</dbReference>
<dbReference type="FunFam" id="3.90.1150.160:FF:000002">
    <property type="entry name" value="Glutamate decarboxylase"/>
    <property type="match status" value="1"/>
</dbReference>
<dbReference type="FunFam" id="4.10.280.50:FF:000001">
    <property type="entry name" value="Glutamate decarboxylase"/>
    <property type="match status" value="1"/>
</dbReference>
<dbReference type="Gene3D" id="3.90.1150.160">
    <property type="match status" value="1"/>
</dbReference>
<dbReference type="Gene3D" id="4.10.280.50">
    <property type="match status" value="1"/>
</dbReference>
<dbReference type="Gene3D" id="3.40.640.10">
    <property type="entry name" value="Type I PLP-dependent aspartate aminotransferase-like (Major domain)"/>
    <property type="match status" value="1"/>
</dbReference>
<dbReference type="InterPro" id="IPR010107">
    <property type="entry name" value="Glutamate_decarboxylase"/>
</dbReference>
<dbReference type="InterPro" id="IPR002129">
    <property type="entry name" value="PyrdxlP-dep_de-COase"/>
</dbReference>
<dbReference type="InterPro" id="IPR015424">
    <property type="entry name" value="PyrdxlP-dep_Trfase"/>
</dbReference>
<dbReference type="InterPro" id="IPR015421">
    <property type="entry name" value="PyrdxlP-dep_Trfase_major"/>
</dbReference>
<dbReference type="InterPro" id="IPR021115">
    <property type="entry name" value="Pyridoxal-P_BS"/>
</dbReference>
<dbReference type="NCBIfam" id="TIGR01788">
    <property type="entry name" value="Glu-decarb-GAD"/>
    <property type="match status" value="1"/>
</dbReference>
<dbReference type="PANTHER" id="PTHR43321">
    <property type="entry name" value="GLUTAMATE DECARBOXYLASE"/>
    <property type="match status" value="1"/>
</dbReference>
<dbReference type="PANTHER" id="PTHR43321:SF3">
    <property type="entry name" value="GLUTAMATE DECARBOXYLASE"/>
    <property type="match status" value="1"/>
</dbReference>
<dbReference type="Pfam" id="PF00282">
    <property type="entry name" value="Pyridoxal_deC"/>
    <property type="match status" value="1"/>
</dbReference>
<dbReference type="SUPFAM" id="SSF53383">
    <property type="entry name" value="PLP-dependent transferases"/>
    <property type="match status" value="1"/>
</dbReference>
<dbReference type="PROSITE" id="PS00392">
    <property type="entry name" value="DDC_GAD_HDC_YDC"/>
    <property type="match status" value="1"/>
</dbReference>
<name>DCEA_SHIFL</name>
<reference key="1">
    <citation type="journal article" date="2002" name="Nucleic Acids Res.">
        <title>Genome sequence of Shigella flexneri 2a: insights into pathogenicity through comparison with genomes of Escherichia coli K12 and O157.</title>
        <authorList>
            <person name="Jin Q."/>
            <person name="Yuan Z."/>
            <person name="Xu J."/>
            <person name="Wang Y."/>
            <person name="Shen Y."/>
            <person name="Lu W."/>
            <person name="Wang J."/>
            <person name="Liu H."/>
            <person name="Yang J."/>
            <person name="Yang F."/>
            <person name="Zhang X."/>
            <person name="Zhang J."/>
            <person name="Yang G."/>
            <person name="Wu H."/>
            <person name="Qu D."/>
            <person name="Dong J."/>
            <person name="Sun L."/>
            <person name="Xue Y."/>
            <person name="Zhao A."/>
            <person name="Gao Y."/>
            <person name="Zhu J."/>
            <person name="Kan B."/>
            <person name="Ding K."/>
            <person name="Chen S."/>
            <person name="Cheng H."/>
            <person name="Yao Z."/>
            <person name="He B."/>
            <person name="Chen R."/>
            <person name="Ma D."/>
            <person name="Qiang B."/>
            <person name="Wen Y."/>
            <person name="Hou Y."/>
            <person name="Yu J."/>
        </authorList>
    </citation>
    <scope>NUCLEOTIDE SEQUENCE [LARGE SCALE GENOMIC DNA]</scope>
    <source>
        <strain>301 / Serotype 2a</strain>
    </source>
</reference>
<reference key="2">
    <citation type="journal article" date="2003" name="Infect. Immun.">
        <title>Complete genome sequence and comparative genomics of Shigella flexneri serotype 2a strain 2457T.</title>
        <authorList>
            <person name="Wei J."/>
            <person name="Goldberg M.B."/>
            <person name="Burland V."/>
            <person name="Venkatesan M.M."/>
            <person name="Deng W."/>
            <person name="Fournier G."/>
            <person name="Mayhew G.F."/>
            <person name="Plunkett G. III"/>
            <person name="Rose D.J."/>
            <person name="Darling A."/>
            <person name="Mau B."/>
            <person name="Perna N.T."/>
            <person name="Payne S.M."/>
            <person name="Runyen-Janecky L.J."/>
            <person name="Zhou S."/>
            <person name="Schwartz D.C."/>
            <person name="Blattner F.R."/>
        </authorList>
    </citation>
    <scope>NUCLEOTIDE SEQUENCE [LARGE SCALE GENOMIC DNA]</scope>
    <source>
        <strain>ATCC 700930 / 2457T / Serotype 2a</strain>
    </source>
</reference>
<comment type="function">
    <text evidence="1">Converts glutamate to gamma-aminobutyrate (GABA), consuming one intracellular proton in the reaction. The gad system helps to maintain a near-neutral intracellular pH when cells are exposed to extremely acidic conditions. The ability to survive transit through the acidic conditions of the stomach is essential for successful colonization of the mammalian host by commensal and pathogenic bacteria (By similarity).</text>
</comment>
<comment type="catalytic activity">
    <reaction>
        <text>L-glutamate + H(+) = 4-aminobutanoate + CO2</text>
        <dbReference type="Rhea" id="RHEA:17785"/>
        <dbReference type="ChEBI" id="CHEBI:15378"/>
        <dbReference type="ChEBI" id="CHEBI:16526"/>
        <dbReference type="ChEBI" id="CHEBI:29985"/>
        <dbReference type="ChEBI" id="CHEBI:59888"/>
        <dbReference type="EC" id="4.1.1.15"/>
    </reaction>
</comment>
<comment type="cofactor">
    <cofactor evidence="1">
        <name>pyridoxal 5'-phosphate</name>
        <dbReference type="ChEBI" id="CHEBI:597326"/>
    </cofactor>
</comment>
<comment type="subunit">
    <text evidence="1">Homohexamer.</text>
</comment>
<comment type="induction">
    <text evidence="1">By acidic conditions. Expression is regulated by a complex system involving RpoS, cAMP, CRP, EvgAS, H-NS, GadE, GadW and GadX. The level of involvement for each regulator varies depending upon the growth phase and the medium (By similarity).</text>
</comment>
<comment type="similarity">
    <text evidence="2">Belongs to the group II decarboxylase family.</text>
</comment>
<organism>
    <name type="scientific">Shigella flexneri</name>
    <dbReference type="NCBI Taxonomy" id="623"/>
    <lineage>
        <taxon>Bacteria</taxon>
        <taxon>Pseudomonadati</taxon>
        <taxon>Pseudomonadota</taxon>
        <taxon>Gammaproteobacteria</taxon>
        <taxon>Enterobacterales</taxon>
        <taxon>Enterobacteriaceae</taxon>
        <taxon>Shigella</taxon>
    </lineage>
</organism>
<gene>
    <name type="primary">gadA</name>
    <name type="ordered locus">SF3594</name>
    <name type="ordered locus">S4173</name>
</gene>
<evidence type="ECO:0000250" key="1"/>
<evidence type="ECO:0000305" key="2"/>
<sequence length="466" mass="52700">MDQKLLTDFRSELLDSRFGAKAISTIAESKRFPLHEMRDDVAFQIINDELYLDGNARQNLATFCQTWDDENVHKLMDLSINKNWIDKEEYPQSAAIDLRCVNMVADLWHAPAPKNGQAVGTNTIGSSEACMLGGMAMKWRWRKRMEAAGKPTDKPNLVCGPVQICWHKFARYWDVELREIPMRPGQLFMDPKRMIEACDENTIGVVPTFGVTYTGNYEFPQPLHDALDKFQADTGIDIDMHIDAASGGFLAPFVAPDIVWDFRLPRVKSISASGHKFGLAPLGCGWVIWRDEEALPQELVFNVDYLGGQIGTFAINFSRPAGQVIAQYYEFLRLGREGYTKVQNASYQVAAYLADEIAKQGPYEFICTGRPDEGIPAVCFKLKDGEDPGYTLYDLSERLRLRGWQVPAFTLGGEATDIVVMRIMCRRGFEMDFAELLLEDYKASLKYLSDHPKLQGIAQQNSFKHT</sequence>
<proteinExistence type="inferred from homology"/>
<accession>Q83PR1</accession>
<accession>Q7UAY1</accession>
<feature type="chain" id="PRO_0000146981" description="Glutamate decarboxylase alpha">
    <location>
        <begin position="1"/>
        <end position="466"/>
    </location>
</feature>
<feature type="binding site" evidence="1">
    <location>
        <position position="62"/>
    </location>
    <ligand>
        <name>substrate</name>
    </ligand>
</feature>
<feature type="binding site" evidence="1">
    <location>
        <position position="83"/>
    </location>
    <ligand>
        <name>substrate</name>
    </ligand>
</feature>
<feature type="binding site" evidence="1">
    <location>
        <begin position="126"/>
        <end position="127"/>
    </location>
    <ligand>
        <name>pyridoxal 5'-phosphate</name>
        <dbReference type="ChEBI" id="CHEBI:597326"/>
    </ligand>
</feature>
<feature type="binding site" evidence="1">
    <location>
        <position position="212"/>
    </location>
    <ligand>
        <name>pyridoxal 5'-phosphate</name>
        <dbReference type="ChEBI" id="CHEBI:597326"/>
    </ligand>
</feature>
<feature type="binding site" evidence="1">
    <location>
        <position position="275"/>
    </location>
    <ligand>
        <name>pyridoxal 5'-phosphate</name>
        <dbReference type="ChEBI" id="CHEBI:597326"/>
    </ligand>
</feature>
<feature type="modified residue" description="N6-(pyridoxal phosphate)lysine" evidence="1">
    <location>
        <position position="276"/>
    </location>
</feature>
<protein>
    <recommendedName>
        <fullName>Glutamate decarboxylase alpha</fullName>
        <shortName>GAD-alpha</shortName>
        <ecNumber>4.1.1.15</ecNumber>
    </recommendedName>
</protein>